<accession>Q7X911</accession>
<accession>Q9FKY0</accession>
<evidence type="ECO:0000250" key="1"/>
<evidence type="ECO:0000255" key="2"/>
<evidence type="ECO:0000255" key="3">
    <source>
        <dbReference type="PROSITE-ProRule" id="PRU00183"/>
    </source>
</evidence>
<evidence type="ECO:0000269" key="4">
    <source>
    </source>
</evidence>
<evidence type="ECO:0000269" key="5">
    <source>
    </source>
</evidence>
<evidence type="ECO:0000269" key="6">
    <source>
    </source>
</evidence>
<evidence type="ECO:0000305" key="7"/>
<organism>
    <name type="scientific">Arabidopsis thaliana</name>
    <name type="common">Mouse-ear cress</name>
    <dbReference type="NCBI Taxonomy" id="3702"/>
    <lineage>
        <taxon>Eukaryota</taxon>
        <taxon>Viridiplantae</taxon>
        <taxon>Streptophyta</taxon>
        <taxon>Embryophyta</taxon>
        <taxon>Tracheophyta</taxon>
        <taxon>Spermatophyta</taxon>
        <taxon>Magnoliopsida</taxon>
        <taxon>eudicotyledons</taxon>
        <taxon>Gunneridae</taxon>
        <taxon>Pentapetalae</taxon>
        <taxon>rosids</taxon>
        <taxon>malvids</taxon>
        <taxon>Brassicales</taxon>
        <taxon>Brassicaceae</taxon>
        <taxon>Camelineae</taxon>
        <taxon>Arabidopsis</taxon>
    </lineage>
</organism>
<keyword id="KW-0256">Endoplasmic reticulum</keyword>
<keyword id="KW-0378">Hydrolase</keyword>
<keyword id="KW-0472">Membrane</keyword>
<keyword id="KW-1185">Reference proteome</keyword>
<keyword id="KW-0812">Transmembrane</keyword>
<keyword id="KW-1133">Transmembrane helix</keyword>
<name>SAC6_ARATH</name>
<gene>
    <name type="primary">SAC6</name>
    <name type="synonym">IBS2</name>
    <name type="synonym">SAC1B</name>
    <name type="ordered locus">At5g66020</name>
    <name type="ORF">K2A18.9</name>
</gene>
<proteinExistence type="evidence at transcript level"/>
<protein>
    <recommendedName>
        <fullName>Phosphoinositide phosphatase SAC6</fullName>
        <shortName>AtSAC6</shortName>
        <ecNumber>3.1.3.-</ecNumber>
    </recommendedName>
    <alternativeName>
        <fullName>Protein IMPAIRED IN BABA-INDUCED STERILITY 2</fullName>
    </alternativeName>
    <alternativeName>
        <fullName>Protein SUPPRESSOR OF ACTIN 1B</fullName>
        <shortName>AtSAC1b</shortName>
    </alternativeName>
    <alternativeName>
        <fullName>Protein SUPPRESSOR OF ACTIN 6</fullName>
    </alternativeName>
    <alternativeName>
        <fullName>SAC domain protein 6</fullName>
    </alternativeName>
    <alternativeName>
        <fullName>SAC1-like protein AtSAC1b</fullName>
    </alternativeName>
</protein>
<feature type="chain" id="PRO_0000421972" description="Phosphoinositide phosphatase SAC6">
    <location>
        <begin position="1"/>
        <end position="593"/>
    </location>
</feature>
<feature type="transmembrane region" description="Helical" evidence="2">
    <location>
        <begin position="526"/>
        <end position="546"/>
    </location>
</feature>
<feature type="transmembrane region" description="Helical" evidence="2">
    <location>
        <begin position="555"/>
        <end position="575"/>
    </location>
</feature>
<feature type="domain" description="SAC" evidence="3">
    <location>
        <begin position="128"/>
        <end position="456"/>
    </location>
</feature>
<feature type="short sequence motif" description="Phosphatase catalytic core">
    <location>
        <begin position="391"/>
        <end position="402"/>
    </location>
</feature>
<sequence>MVSRLKIHSGLRLWEFPDQYVIEPTDGSSASCLDISRLDGSMKLIDQVAECNSLRVPKIRSIFGVVGMLKLLAGSYLVVVTESESVGSFLGHPIYKINSLKFLPCDHSLENPHEEQKKMETDDYSRLLSVAERTTGLYFSYEINLTLTAQRLHDLGDESKLLPLWRQAEPRFLWNNYMLEVLIDNKLDQFLLPVIQGSFHSFQTAIGRDIVDITLIARRCSRRNGTRMWRRGADPDGYVANFVETEQIVRMNGYTSSFVQIRGSMPFMWEQIVDLTYKPKFEIVQPEEAARIAERHFLDLRKKYGSVLAVDLVNKHGGEGRLSERFAGAMQHITGDDVRYLHFDFHHICGHIHFERLAILYEQMEDFLEKNGYFLLNEKGEKMKEQLGIVRTNCIDCLDRTNVTQSMIGRKLLELQLKRIGVFGAEETIRSHQNFDECYKILWANHGDDISIQYSGTPALKGDFVRYGQRTIQGVLQDGWNALARYYLNNFADGTKQDAIDLVQGHYIVAVSRDMAPVPRKRGLEAVANFPVALTVILISFWFATMSVKQVGSGYKHLLFSLVWAGISVAVAALVRANGRIFCNRPSLHKPRS</sequence>
<comment type="function">
    <text evidence="4 6">Phosphoinositide phosphatase that hydrolyzes PtdIns(3)P and PtdIns(4)P. Involved in priming for different defense responses.</text>
</comment>
<comment type="subcellular location">
    <subcellularLocation>
        <location evidence="4">Endoplasmic reticulum membrane</location>
        <topology evidence="4">Multi-pass membrane protein</topology>
    </subcellularLocation>
</comment>
<comment type="tissue specificity">
    <text evidence="4 5">Predominantly expressed in flowers.</text>
</comment>
<comment type="induction">
    <text evidence="5">By salt stress.</text>
</comment>
<comment type="domain">
    <text evidence="1">The phosphatase catalytic core motif (or RXNCXDCLDRTN motif) from the SAC domain is found in metal-independent protein phosphatases and inositol polyphosphate phosphatases.</text>
</comment>
<comment type="disruption phenotype">
    <text evidence="6">Impaired in BABA-induced sterility (ibs) and BABA-induced protection against P.syringae, H.parasitica, and salt. Affected in the priming for callose deposition.</text>
</comment>
<comment type="sequence caution" evidence="7">
    <conflict type="erroneous gene model prediction">
        <sequence resource="EMBL-CDS" id="BAB10407"/>
    </conflict>
</comment>
<dbReference type="EC" id="3.1.3.-"/>
<dbReference type="EMBL" id="AF266458">
    <property type="protein sequence ID" value="AAP41367.1"/>
    <property type="molecule type" value="mRNA"/>
</dbReference>
<dbReference type="EMBL" id="AY227249">
    <property type="protein sequence ID" value="AAP49839.1"/>
    <property type="molecule type" value="mRNA"/>
</dbReference>
<dbReference type="EMBL" id="AB011474">
    <property type="protein sequence ID" value="BAB10407.1"/>
    <property type="status" value="ALT_SEQ"/>
    <property type="molecule type" value="Genomic_DNA"/>
</dbReference>
<dbReference type="EMBL" id="CP002688">
    <property type="protein sequence ID" value="AED98142.1"/>
    <property type="molecule type" value="Genomic_DNA"/>
</dbReference>
<dbReference type="RefSeq" id="NP_201403.2">
    <property type="nucleotide sequence ID" value="NM_125999.3"/>
</dbReference>
<dbReference type="SMR" id="Q7X911"/>
<dbReference type="FunCoup" id="Q7X911">
    <property type="interactions" value="4738"/>
</dbReference>
<dbReference type="STRING" id="3702.Q7X911"/>
<dbReference type="GlyGen" id="Q7X911">
    <property type="glycosylation" value="1 site"/>
</dbReference>
<dbReference type="iPTMnet" id="Q7X911"/>
<dbReference type="PaxDb" id="3702-AT5G66020.1"/>
<dbReference type="ProteomicsDB" id="226617"/>
<dbReference type="EnsemblPlants" id="AT5G66020.1">
    <property type="protein sequence ID" value="AT5G66020.1"/>
    <property type="gene ID" value="AT5G66020"/>
</dbReference>
<dbReference type="GeneID" id="836732"/>
<dbReference type="Gramene" id="AT5G66020.1">
    <property type="protein sequence ID" value="AT5G66020.1"/>
    <property type="gene ID" value="AT5G66020"/>
</dbReference>
<dbReference type="KEGG" id="ath:AT5G66020"/>
<dbReference type="Araport" id="AT5G66020"/>
<dbReference type="TAIR" id="AT5G66020">
    <property type="gene designation" value="ATSAC1B"/>
</dbReference>
<dbReference type="eggNOG" id="KOG1889">
    <property type="taxonomic scope" value="Eukaryota"/>
</dbReference>
<dbReference type="HOGENOM" id="CLU_003016_7_2_1"/>
<dbReference type="InParanoid" id="Q7X911"/>
<dbReference type="OMA" id="TNRPRFY"/>
<dbReference type="PhylomeDB" id="Q7X911"/>
<dbReference type="BioCyc" id="ARA:AT5G66020-MONOMER"/>
<dbReference type="PRO" id="PR:Q7X911"/>
<dbReference type="Proteomes" id="UP000006548">
    <property type="component" value="Chromosome 5"/>
</dbReference>
<dbReference type="ExpressionAtlas" id="Q7X911">
    <property type="expression patterns" value="baseline and differential"/>
</dbReference>
<dbReference type="GO" id="GO:0005783">
    <property type="term" value="C:endoplasmic reticulum"/>
    <property type="evidence" value="ECO:0000314"/>
    <property type="project" value="UniProtKB"/>
</dbReference>
<dbReference type="GO" id="GO:0005789">
    <property type="term" value="C:endoplasmic reticulum membrane"/>
    <property type="evidence" value="ECO:0007669"/>
    <property type="project" value="UniProtKB-SubCell"/>
</dbReference>
<dbReference type="GO" id="GO:0016791">
    <property type="term" value="F:phosphatase activity"/>
    <property type="evidence" value="ECO:0007669"/>
    <property type="project" value="InterPro"/>
</dbReference>
<dbReference type="GO" id="GO:0009651">
    <property type="term" value="P:response to salt stress"/>
    <property type="evidence" value="ECO:0000270"/>
    <property type="project" value="UniProtKB"/>
</dbReference>
<dbReference type="InterPro" id="IPR002013">
    <property type="entry name" value="SAC_dom"/>
</dbReference>
<dbReference type="PANTHER" id="PTHR45662">
    <property type="entry name" value="PHOSPHATIDYLINOSITIDE PHOSPHATASE SAC1"/>
    <property type="match status" value="1"/>
</dbReference>
<dbReference type="PANTHER" id="PTHR45662:SF2">
    <property type="entry name" value="PHOSPHATIDYLINOSITOL-3-PHOSPHATASE SAC1"/>
    <property type="match status" value="1"/>
</dbReference>
<dbReference type="Pfam" id="PF02383">
    <property type="entry name" value="Syja_N"/>
    <property type="match status" value="1"/>
</dbReference>
<dbReference type="PROSITE" id="PS50275">
    <property type="entry name" value="SAC"/>
    <property type="match status" value="1"/>
</dbReference>
<reference key="1">
    <citation type="journal article" date="2003" name="Plant J.">
        <title>Three SAC1-like genes show overlapping patterns of expression in Arabidopsis but are remarkably silent during embryo development.</title>
        <authorList>
            <person name="Despres B."/>
            <person name="Bouissonnie F."/>
            <person name="Wu H.J."/>
            <person name="Gomord V."/>
            <person name="Guilleminot J."/>
            <person name="Grellet F."/>
            <person name="Berger F."/>
            <person name="Delseny M."/>
            <person name="Devic M."/>
        </authorList>
    </citation>
    <scope>NUCLEOTIDE SEQUENCE [MRNA]</scope>
    <scope>TISSUE SPECIFICITY</scope>
    <scope>FUNCTION</scope>
    <scope>SUBCELLULAR LOCATION</scope>
    <source>
        <strain>cv. Wassilewskija</strain>
        <tissue>Flower bud</tissue>
    </source>
</reference>
<reference key="2">
    <citation type="journal article" date="2003" name="Plant Physiol.">
        <title>The SAC domain-containing protein gene family in Arabidopsis.</title>
        <authorList>
            <person name="Zhong R."/>
            <person name="Ye Z.-H."/>
        </authorList>
    </citation>
    <scope>NUCLEOTIDE SEQUENCE [MRNA]</scope>
    <scope>GENE FAMILY</scope>
    <scope>DOMAIN</scope>
    <scope>TISSUE SPECIFICITY</scope>
    <scope>INDUCTION BY SALT</scope>
</reference>
<reference key="3">
    <citation type="journal article" date="1998" name="DNA Res.">
        <title>Structural analysis of Arabidopsis thaliana chromosome 5. V. Sequence features of the regions of 1,381,565 bp covered by twenty one physically assigned P1 and TAC clones.</title>
        <authorList>
            <person name="Kaneko T."/>
            <person name="Kotani H."/>
            <person name="Nakamura Y."/>
            <person name="Sato S."/>
            <person name="Asamizu E."/>
            <person name="Miyajima N."/>
            <person name="Tabata S."/>
        </authorList>
    </citation>
    <scope>NUCLEOTIDE SEQUENCE [LARGE SCALE GENOMIC DNA]</scope>
    <source>
        <strain>cv. Columbia</strain>
    </source>
</reference>
<reference key="4">
    <citation type="journal article" date="2017" name="Plant J.">
        <title>Araport11: a complete reannotation of the Arabidopsis thaliana reference genome.</title>
        <authorList>
            <person name="Cheng C.Y."/>
            <person name="Krishnakumar V."/>
            <person name="Chan A.P."/>
            <person name="Thibaud-Nissen F."/>
            <person name="Schobel S."/>
            <person name="Town C.D."/>
        </authorList>
    </citation>
    <scope>GENOME REANNOTATION</scope>
    <source>
        <strain>cv. Columbia</strain>
    </source>
</reference>
<reference key="5">
    <citation type="journal article" date="2005" name="Plant Cell">
        <title>Dissecting the beta-aminobutyric acid-induced priming phenomenon in Arabidopsis.</title>
        <authorList>
            <person name="Ton J."/>
            <person name="Jakab G."/>
            <person name="Toquin V."/>
            <person name="Flors V."/>
            <person name="Iavicoli A."/>
            <person name="Maeder M.N."/>
            <person name="Metraux J.-P."/>
            <person name="Mauch-Mani B."/>
        </authorList>
    </citation>
    <scope>DISRUPTION PHENOTYPE</scope>
    <scope>FUNCTION</scope>
</reference>